<dbReference type="EC" id="1.6.1.1" evidence="1"/>
<dbReference type="EMBL" id="CP000247">
    <property type="protein sequence ID" value="ABG72133.1"/>
    <property type="molecule type" value="Genomic_DNA"/>
</dbReference>
<dbReference type="RefSeq" id="WP_001120813.1">
    <property type="nucleotide sequence ID" value="NC_008253.1"/>
</dbReference>
<dbReference type="SMR" id="Q0TA96"/>
<dbReference type="KEGG" id="ecp:ECP_4177"/>
<dbReference type="HOGENOM" id="CLU_016755_0_0_6"/>
<dbReference type="Proteomes" id="UP000009182">
    <property type="component" value="Chromosome"/>
</dbReference>
<dbReference type="GO" id="GO:0005829">
    <property type="term" value="C:cytosol"/>
    <property type="evidence" value="ECO:0007669"/>
    <property type="project" value="TreeGrafter"/>
</dbReference>
<dbReference type="GO" id="GO:0004148">
    <property type="term" value="F:dihydrolipoyl dehydrogenase (NADH) activity"/>
    <property type="evidence" value="ECO:0007669"/>
    <property type="project" value="TreeGrafter"/>
</dbReference>
<dbReference type="GO" id="GO:0050660">
    <property type="term" value="F:flavin adenine dinucleotide binding"/>
    <property type="evidence" value="ECO:0007669"/>
    <property type="project" value="TreeGrafter"/>
</dbReference>
<dbReference type="GO" id="GO:0003957">
    <property type="term" value="F:NAD(P)+ transhydrogenase (Si-specific) activity"/>
    <property type="evidence" value="ECO:0007669"/>
    <property type="project" value="UniProtKB-UniRule"/>
</dbReference>
<dbReference type="GO" id="GO:0006103">
    <property type="term" value="P:2-oxoglutarate metabolic process"/>
    <property type="evidence" value="ECO:0007669"/>
    <property type="project" value="TreeGrafter"/>
</dbReference>
<dbReference type="GO" id="GO:0006739">
    <property type="term" value="P:NADP metabolic process"/>
    <property type="evidence" value="ECO:0007669"/>
    <property type="project" value="UniProtKB-UniRule"/>
</dbReference>
<dbReference type="FunFam" id="3.30.390.30:FF:000002">
    <property type="entry name" value="Soluble pyridine nucleotide transhydrogenase"/>
    <property type="match status" value="1"/>
</dbReference>
<dbReference type="FunFam" id="3.50.50.60:FF:000008">
    <property type="entry name" value="Soluble pyridine nucleotide transhydrogenase"/>
    <property type="match status" value="1"/>
</dbReference>
<dbReference type="Gene3D" id="3.30.390.30">
    <property type="match status" value="1"/>
</dbReference>
<dbReference type="Gene3D" id="3.50.50.60">
    <property type="entry name" value="FAD/NAD(P)-binding domain"/>
    <property type="match status" value="2"/>
</dbReference>
<dbReference type="HAMAP" id="MF_00247">
    <property type="entry name" value="SthA"/>
    <property type="match status" value="1"/>
</dbReference>
<dbReference type="InterPro" id="IPR050151">
    <property type="entry name" value="Class-I_Pyr_Nuc-Dis_Oxidored"/>
</dbReference>
<dbReference type="InterPro" id="IPR036188">
    <property type="entry name" value="FAD/NAD-bd_sf"/>
</dbReference>
<dbReference type="InterPro" id="IPR023753">
    <property type="entry name" value="FAD/NAD-binding_dom"/>
</dbReference>
<dbReference type="InterPro" id="IPR016156">
    <property type="entry name" value="FAD/NAD-linked_Rdtase_dimer_sf"/>
</dbReference>
<dbReference type="InterPro" id="IPR001100">
    <property type="entry name" value="Pyr_nuc-diS_OxRdtase"/>
</dbReference>
<dbReference type="InterPro" id="IPR004099">
    <property type="entry name" value="Pyr_nucl-diS_OxRdtase_dimer"/>
</dbReference>
<dbReference type="InterPro" id="IPR022962">
    <property type="entry name" value="STH_gammaproteobact"/>
</dbReference>
<dbReference type="NCBIfam" id="NF003585">
    <property type="entry name" value="PRK05249.1"/>
    <property type="match status" value="1"/>
</dbReference>
<dbReference type="PANTHER" id="PTHR22912">
    <property type="entry name" value="DISULFIDE OXIDOREDUCTASE"/>
    <property type="match status" value="1"/>
</dbReference>
<dbReference type="PANTHER" id="PTHR22912:SF93">
    <property type="entry name" value="SOLUBLE PYRIDINE NUCLEOTIDE TRANSHYDROGENASE"/>
    <property type="match status" value="1"/>
</dbReference>
<dbReference type="Pfam" id="PF07992">
    <property type="entry name" value="Pyr_redox_2"/>
    <property type="match status" value="1"/>
</dbReference>
<dbReference type="Pfam" id="PF02852">
    <property type="entry name" value="Pyr_redox_dim"/>
    <property type="match status" value="1"/>
</dbReference>
<dbReference type="PIRSF" id="PIRSF000350">
    <property type="entry name" value="Mercury_reductase_MerA"/>
    <property type="match status" value="1"/>
</dbReference>
<dbReference type="PRINTS" id="PR00368">
    <property type="entry name" value="FADPNR"/>
</dbReference>
<dbReference type="PRINTS" id="PR00411">
    <property type="entry name" value="PNDRDTASEI"/>
</dbReference>
<dbReference type="SUPFAM" id="SSF51905">
    <property type="entry name" value="FAD/NAD(P)-binding domain"/>
    <property type="match status" value="1"/>
</dbReference>
<dbReference type="SUPFAM" id="SSF55424">
    <property type="entry name" value="FAD/NAD-linked reductases, dimerisation (C-terminal) domain"/>
    <property type="match status" value="1"/>
</dbReference>
<feature type="chain" id="PRO_0000260235" description="Soluble pyridine nucleotide transhydrogenase">
    <location>
        <begin position="1"/>
        <end position="466"/>
    </location>
</feature>
<feature type="binding site" evidence="1">
    <location>
        <begin position="36"/>
        <end position="45"/>
    </location>
    <ligand>
        <name>FAD</name>
        <dbReference type="ChEBI" id="CHEBI:57692"/>
    </ligand>
</feature>
<keyword id="KW-0963">Cytoplasm</keyword>
<keyword id="KW-0274">FAD</keyword>
<keyword id="KW-0285">Flavoprotein</keyword>
<keyword id="KW-0520">NAD</keyword>
<keyword id="KW-0521">NADP</keyword>
<keyword id="KW-0560">Oxidoreductase</keyword>
<gene>
    <name evidence="1" type="primary">sthA</name>
    <name evidence="1" type="synonym">udhA</name>
    <name type="ordered locus">ECP_4177</name>
</gene>
<protein>
    <recommendedName>
        <fullName evidence="1">Soluble pyridine nucleotide transhydrogenase</fullName>
        <shortName evidence="1">STH</shortName>
        <ecNumber evidence="1">1.6.1.1</ecNumber>
    </recommendedName>
    <alternativeName>
        <fullName evidence="1">NAD(P)(+) transhydrogenase [B-specific]</fullName>
    </alternativeName>
</protein>
<proteinExistence type="inferred from homology"/>
<accession>Q0TA96</accession>
<comment type="function">
    <text evidence="1">Conversion of NADPH, generated by peripheral catabolic pathways, to NADH, which can enter the respiratory chain for energy generation.</text>
</comment>
<comment type="catalytic activity">
    <reaction evidence="1">
        <text>NAD(+) + NADPH = NADH + NADP(+)</text>
        <dbReference type="Rhea" id="RHEA:11692"/>
        <dbReference type="ChEBI" id="CHEBI:57540"/>
        <dbReference type="ChEBI" id="CHEBI:57783"/>
        <dbReference type="ChEBI" id="CHEBI:57945"/>
        <dbReference type="ChEBI" id="CHEBI:58349"/>
        <dbReference type="EC" id="1.6.1.1"/>
    </reaction>
</comment>
<comment type="cofactor">
    <cofactor evidence="1">
        <name>FAD</name>
        <dbReference type="ChEBI" id="CHEBI:57692"/>
    </cofactor>
    <text evidence="1">Binds 1 FAD per subunit.</text>
</comment>
<comment type="subcellular location">
    <subcellularLocation>
        <location evidence="1">Cytoplasm</location>
    </subcellularLocation>
</comment>
<comment type="similarity">
    <text evidence="1">Belongs to the class-I pyridine nucleotide-disulfide oxidoreductase family.</text>
</comment>
<name>STHA_ECOL5</name>
<organism>
    <name type="scientific">Escherichia coli O6:K15:H31 (strain 536 / UPEC)</name>
    <dbReference type="NCBI Taxonomy" id="362663"/>
    <lineage>
        <taxon>Bacteria</taxon>
        <taxon>Pseudomonadati</taxon>
        <taxon>Pseudomonadota</taxon>
        <taxon>Gammaproteobacteria</taxon>
        <taxon>Enterobacterales</taxon>
        <taxon>Enterobacteriaceae</taxon>
        <taxon>Escherichia</taxon>
    </lineage>
</organism>
<reference key="1">
    <citation type="journal article" date="2006" name="Mol. Microbiol.">
        <title>Role of pathogenicity island-associated integrases in the genome plasticity of uropathogenic Escherichia coli strain 536.</title>
        <authorList>
            <person name="Hochhut B."/>
            <person name="Wilde C."/>
            <person name="Balling G."/>
            <person name="Middendorf B."/>
            <person name="Dobrindt U."/>
            <person name="Brzuszkiewicz E."/>
            <person name="Gottschalk G."/>
            <person name="Carniel E."/>
            <person name="Hacker J."/>
        </authorList>
    </citation>
    <scope>NUCLEOTIDE SEQUENCE [LARGE SCALE GENOMIC DNA]</scope>
    <source>
        <strain>536 / UPEC</strain>
    </source>
</reference>
<evidence type="ECO:0000255" key="1">
    <source>
        <dbReference type="HAMAP-Rule" id="MF_00247"/>
    </source>
</evidence>
<sequence length="466" mass="51590">MPHSYDYDAIVIGSGPGGEGAAMGLVKQGARVAVIERYQNVGGGCTHWGTIPSKALRHAVSRIIEFNQNPLYSDHSRLLRSSFADILNHADNVINQQTRMRQGFYERNHCEILQGNARFVDEHTLALDCPDGSVETLTAEKFVIACGSRPYHPTDVDFTHPRIYDSDSILSMHHEPRHVLIYGAGVIGCEYASIFRGMDVKVDLINTRDRLLAFLDQEMSDSLSYHFWNSGVVIRHNEEYEKIEGCDDGVIMHLKSGKKLKADCLLYANGRTGNTDSLALQNIGLETDSRGQLKVNSMYQTAQPHVYAVGDVIGYPSLASAAYDQGRIAAQALVKGEATAHLIEDIPTGIYTIPEISSVGKTEQQLTTMKVPYEVGRAQFKHLARAQIVGMNVGTLKILFHRETKEILGIHCFGERAAEIIHIGQAIMEQKGGGNTIEYFVNTTFNYPTMAEAYRVAALNGLNRLF</sequence>